<evidence type="ECO:0000255" key="1">
    <source>
        <dbReference type="HAMAP-Rule" id="MF_00067"/>
    </source>
</evidence>
<organism>
    <name type="scientific">Vibrio vulnificus (strain CMCP6)</name>
    <dbReference type="NCBI Taxonomy" id="216895"/>
    <lineage>
        <taxon>Bacteria</taxon>
        <taxon>Pseudomonadati</taxon>
        <taxon>Pseudomonadota</taxon>
        <taxon>Gammaproteobacteria</taxon>
        <taxon>Vibrionales</taxon>
        <taxon>Vibrionaceae</taxon>
        <taxon>Vibrio</taxon>
    </lineage>
</organism>
<name>GMHA_VIBVU</name>
<feature type="chain" id="PRO_0000136550" description="Phosphoheptose isomerase">
    <location>
        <begin position="1"/>
        <end position="191"/>
    </location>
</feature>
<feature type="domain" description="SIS" evidence="1">
    <location>
        <begin position="37"/>
        <end position="191"/>
    </location>
</feature>
<feature type="binding site" evidence="1">
    <location>
        <begin position="52"/>
        <end position="54"/>
    </location>
    <ligand>
        <name>substrate</name>
    </ligand>
</feature>
<feature type="binding site" evidence="1">
    <location>
        <position position="61"/>
    </location>
    <ligand>
        <name>Zn(2+)</name>
        <dbReference type="ChEBI" id="CHEBI:29105"/>
    </ligand>
</feature>
<feature type="binding site" evidence="1">
    <location>
        <position position="65"/>
    </location>
    <ligand>
        <name>substrate</name>
    </ligand>
</feature>
<feature type="binding site" evidence="1">
    <location>
        <position position="65"/>
    </location>
    <ligand>
        <name>Zn(2+)</name>
        <dbReference type="ChEBI" id="CHEBI:29105"/>
    </ligand>
</feature>
<feature type="binding site" evidence="1">
    <location>
        <begin position="93"/>
        <end position="94"/>
    </location>
    <ligand>
        <name>substrate</name>
    </ligand>
</feature>
<feature type="binding site" evidence="1">
    <location>
        <begin position="119"/>
        <end position="121"/>
    </location>
    <ligand>
        <name>substrate</name>
    </ligand>
</feature>
<feature type="binding site" evidence="1">
    <location>
        <position position="124"/>
    </location>
    <ligand>
        <name>substrate</name>
    </ligand>
</feature>
<feature type="binding site" evidence="1">
    <location>
        <position position="172"/>
    </location>
    <ligand>
        <name>substrate</name>
    </ligand>
</feature>
<feature type="binding site" evidence="1">
    <location>
        <position position="172"/>
    </location>
    <ligand>
        <name>Zn(2+)</name>
        <dbReference type="ChEBI" id="CHEBI:29105"/>
    </ligand>
</feature>
<feature type="binding site" evidence="1">
    <location>
        <position position="180"/>
    </location>
    <ligand>
        <name>Zn(2+)</name>
        <dbReference type="ChEBI" id="CHEBI:29105"/>
    </ligand>
</feature>
<proteinExistence type="inferred from homology"/>
<gene>
    <name evidence="1" type="primary">gmhA</name>
    <name type="ordered locus">VV1_1897</name>
</gene>
<comment type="function">
    <text evidence="1">Catalyzes the isomerization of sedoheptulose 7-phosphate in D-glycero-D-manno-heptose 7-phosphate.</text>
</comment>
<comment type="catalytic activity">
    <reaction evidence="1">
        <text>2 D-sedoheptulose 7-phosphate = D-glycero-alpha-D-manno-heptose 7-phosphate + D-glycero-beta-D-manno-heptose 7-phosphate</text>
        <dbReference type="Rhea" id="RHEA:27489"/>
        <dbReference type="ChEBI" id="CHEBI:57483"/>
        <dbReference type="ChEBI" id="CHEBI:60203"/>
        <dbReference type="ChEBI" id="CHEBI:60204"/>
        <dbReference type="EC" id="5.3.1.28"/>
    </reaction>
</comment>
<comment type="cofactor">
    <cofactor evidence="1">
        <name>Zn(2+)</name>
        <dbReference type="ChEBI" id="CHEBI:29105"/>
    </cofactor>
    <text evidence="1">Binds 1 zinc ion per subunit.</text>
</comment>
<comment type="pathway">
    <text evidence="1">Carbohydrate biosynthesis; D-glycero-D-manno-heptose 7-phosphate biosynthesis; D-glycero-alpha-D-manno-heptose 7-phosphate and D-glycero-beta-D-manno-heptose 7-phosphate from sedoheptulose 7-phosphate: step 1/1.</text>
</comment>
<comment type="pathway">
    <text>Bacterial outer membrane biogenesis; LPS core biosynthesis.</text>
</comment>
<comment type="subunit">
    <text evidence="1">Homotetramer.</text>
</comment>
<comment type="subcellular location">
    <subcellularLocation>
        <location evidence="1">Cytoplasm</location>
    </subcellularLocation>
</comment>
<comment type="miscellaneous">
    <text evidence="1">The reaction produces a racemic mixture of D-glycero-alpha-D-manno-heptose 7-phosphate and D-glycero-beta-D-manno-heptose 7-phosphate.</text>
</comment>
<comment type="similarity">
    <text evidence="1">Belongs to the SIS family. GmhA subfamily.</text>
</comment>
<dbReference type="EC" id="5.3.1.28" evidence="1"/>
<dbReference type="EMBL" id="AE016795">
    <property type="protein sequence ID" value="AAO10298.1"/>
    <property type="molecule type" value="Genomic_DNA"/>
</dbReference>
<dbReference type="SMR" id="Q8DBC5"/>
<dbReference type="KEGG" id="vvu:VV1_1897"/>
<dbReference type="HOGENOM" id="CLU_080999_4_0_6"/>
<dbReference type="UniPathway" id="UPA00041">
    <property type="reaction ID" value="UER00436"/>
</dbReference>
<dbReference type="UniPathway" id="UPA00958"/>
<dbReference type="Proteomes" id="UP000002275">
    <property type="component" value="Chromosome 1"/>
</dbReference>
<dbReference type="GO" id="GO:0005737">
    <property type="term" value="C:cytoplasm"/>
    <property type="evidence" value="ECO:0007669"/>
    <property type="project" value="UniProtKB-SubCell"/>
</dbReference>
<dbReference type="GO" id="GO:0097367">
    <property type="term" value="F:carbohydrate derivative binding"/>
    <property type="evidence" value="ECO:0007669"/>
    <property type="project" value="InterPro"/>
</dbReference>
<dbReference type="GO" id="GO:0008968">
    <property type="term" value="F:D-sedoheptulose 7-phosphate isomerase activity"/>
    <property type="evidence" value="ECO:0007669"/>
    <property type="project" value="UniProtKB-UniRule"/>
</dbReference>
<dbReference type="GO" id="GO:0008270">
    <property type="term" value="F:zinc ion binding"/>
    <property type="evidence" value="ECO:0007669"/>
    <property type="project" value="UniProtKB-UniRule"/>
</dbReference>
<dbReference type="GO" id="GO:2001061">
    <property type="term" value="P:D-glycero-D-manno-heptose 7-phosphate biosynthetic process"/>
    <property type="evidence" value="ECO:0007669"/>
    <property type="project" value="UniProtKB-UniPathway"/>
</dbReference>
<dbReference type="GO" id="GO:0009244">
    <property type="term" value="P:lipopolysaccharide core region biosynthetic process"/>
    <property type="evidence" value="ECO:0007669"/>
    <property type="project" value="UniProtKB-UniPathway"/>
</dbReference>
<dbReference type="CDD" id="cd05006">
    <property type="entry name" value="SIS_GmhA"/>
    <property type="match status" value="1"/>
</dbReference>
<dbReference type="FunFam" id="3.40.50.10490:FF:000013">
    <property type="entry name" value="Phosphoheptose isomerase"/>
    <property type="match status" value="1"/>
</dbReference>
<dbReference type="Gene3D" id="3.40.50.10490">
    <property type="entry name" value="Glucose-6-phosphate isomerase like protein, domain 1"/>
    <property type="match status" value="1"/>
</dbReference>
<dbReference type="HAMAP" id="MF_00067">
    <property type="entry name" value="GmhA"/>
    <property type="match status" value="1"/>
</dbReference>
<dbReference type="InterPro" id="IPR035461">
    <property type="entry name" value="GmhA/DiaA"/>
</dbReference>
<dbReference type="InterPro" id="IPR004515">
    <property type="entry name" value="Phosphoheptose_Isoase"/>
</dbReference>
<dbReference type="InterPro" id="IPR001347">
    <property type="entry name" value="SIS_dom"/>
</dbReference>
<dbReference type="InterPro" id="IPR046348">
    <property type="entry name" value="SIS_dom_sf"/>
</dbReference>
<dbReference type="InterPro" id="IPR050099">
    <property type="entry name" value="SIS_GmhA/DiaA_subfam"/>
</dbReference>
<dbReference type="NCBIfam" id="TIGR00441">
    <property type="entry name" value="gmhA"/>
    <property type="match status" value="1"/>
</dbReference>
<dbReference type="NCBIfam" id="NF001628">
    <property type="entry name" value="PRK00414.1"/>
    <property type="match status" value="1"/>
</dbReference>
<dbReference type="PANTHER" id="PTHR30390:SF7">
    <property type="entry name" value="PHOSPHOHEPTOSE ISOMERASE"/>
    <property type="match status" value="1"/>
</dbReference>
<dbReference type="PANTHER" id="PTHR30390">
    <property type="entry name" value="SEDOHEPTULOSE 7-PHOSPHATE ISOMERASE / DNAA INITIATOR-ASSOCIATING FACTOR FOR REPLICATION INITIATION"/>
    <property type="match status" value="1"/>
</dbReference>
<dbReference type="Pfam" id="PF13580">
    <property type="entry name" value="SIS_2"/>
    <property type="match status" value="1"/>
</dbReference>
<dbReference type="SUPFAM" id="SSF53697">
    <property type="entry name" value="SIS domain"/>
    <property type="match status" value="1"/>
</dbReference>
<dbReference type="PROSITE" id="PS51464">
    <property type="entry name" value="SIS"/>
    <property type="match status" value="1"/>
</dbReference>
<protein>
    <recommendedName>
        <fullName evidence="1">Phosphoheptose isomerase</fullName>
        <ecNumber evidence="1">5.3.1.28</ecNumber>
    </recommendedName>
    <alternativeName>
        <fullName evidence="1">Sedoheptulose 7-phosphate isomerase</fullName>
    </alternativeName>
</protein>
<reference key="1">
    <citation type="submission" date="2002-12" db="EMBL/GenBank/DDBJ databases">
        <title>Complete genome sequence of Vibrio vulnificus CMCP6.</title>
        <authorList>
            <person name="Rhee J.H."/>
            <person name="Kim S.Y."/>
            <person name="Chung S.S."/>
            <person name="Kim J.J."/>
            <person name="Moon Y.H."/>
            <person name="Jeong H."/>
            <person name="Choy H.E."/>
        </authorList>
    </citation>
    <scope>NUCLEOTIDE SEQUENCE [LARGE SCALE GENOMIC DNA]</scope>
    <source>
        <strain>CMCP6</strain>
    </source>
</reference>
<sequence>MYQDLIRNELTEAADVLNKFLSDDHNIAQIEAAAKMIAESFKQDGKVLSCGNGGSHCDAMHFAEELTGRYRENRPGYAGIAISDPSHLSCVSNDFGYDYVFSRYVEAVGRKGDVLFGLSTSGNSGNILKAIEAAKAKGMKTIALTGKDGGKMAGLADVEIRVPHFGYADRIQEVHIKIIHIIIQLIEKEME</sequence>
<keyword id="KW-0119">Carbohydrate metabolism</keyword>
<keyword id="KW-0963">Cytoplasm</keyword>
<keyword id="KW-0413">Isomerase</keyword>
<keyword id="KW-0448">Lipopolysaccharide biosynthesis</keyword>
<keyword id="KW-0479">Metal-binding</keyword>
<keyword id="KW-0862">Zinc</keyword>
<accession>Q8DBC5</accession>